<proteinExistence type="inferred from homology"/>
<reference key="1">
    <citation type="journal article" date="1989" name="J. Mol. Evol.">
        <title>Variation in salmonid mitochondrial DNA: evolutionary constraints and mechanisms of substitution.</title>
        <authorList>
            <person name="Thomas W.K."/>
            <person name="Beckenbach A.T."/>
        </authorList>
    </citation>
    <scope>NUCLEOTIDE SEQUENCE</scope>
</reference>
<geneLocation type="mitochondrion"/>
<sequence>MNLVTTIITITITLSAVLATISFWLPQISPDAEKLSPYECGFDPLGSARLPFSLRFFLIAILFLLFDLEIALLLPLPWGDQLNAPTLTLLWSTAVLALLTLGLIYEWTQGGLEWAE</sequence>
<name>NU3M_ONCNE</name>
<gene>
    <name type="primary">MT-ND3</name>
    <name type="synonym">MTND3</name>
    <name type="synonym">NADH3</name>
    <name type="synonym">ND3</name>
</gene>
<feature type="chain" id="PRO_0000117780" description="NADH-ubiquinone oxidoreductase chain 3">
    <location>
        <begin position="1"/>
        <end position="116"/>
    </location>
</feature>
<feature type="transmembrane region" description="Helical" evidence="2">
    <location>
        <begin position="3"/>
        <end position="23"/>
    </location>
</feature>
<feature type="transmembrane region" description="Helical" evidence="2">
    <location>
        <begin position="56"/>
        <end position="76"/>
    </location>
</feature>
<feature type="transmembrane region" description="Helical" evidence="2">
    <location>
        <begin position="84"/>
        <end position="104"/>
    </location>
</feature>
<keyword id="KW-0249">Electron transport</keyword>
<keyword id="KW-0472">Membrane</keyword>
<keyword id="KW-0496">Mitochondrion</keyword>
<keyword id="KW-0520">NAD</keyword>
<keyword id="KW-0679">Respiratory chain</keyword>
<keyword id="KW-1278">Translocase</keyword>
<keyword id="KW-0812">Transmembrane</keyword>
<keyword id="KW-1133">Transmembrane helix</keyword>
<keyword id="KW-0813">Transport</keyword>
<keyword id="KW-0830">Ubiquinone</keyword>
<evidence type="ECO:0000250" key="1"/>
<evidence type="ECO:0000255" key="2"/>
<evidence type="ECO:0000305" key="3"/>
<dbReference type="EC" id="7.1.1.2"/>
<dbReference type="PIR" id="H30396">
    <property type="entry name" value="H30396"/>
</dbReference>
<dbReference type="SMR" id="P20688"/>
<dbReference type="GO" id="GO:0031966">
    <property type="term" value="C:mitochondrial membrane"/>
    <property type="evidence" value="ECO:0007669"/>
    <property type="project" value="UniProtKB-SubCell"/>
</dbReference>
<dbReference type="GO" id="GO:0030964">
    <property type="term" value="C:NADH dehydrogenase complex"/>
    <property type="evidence" value="ECO:0007669"/>
    <property type="project" value="TreeGrafter"/>
</dbReference>
<dbReference type="GO" id="GO:0008137">
    <property type="term" value="F:NADH dehydrogenase (ubiquinone) activity"/>
    <property type="evidence" value="ECO:0007669"/>
    <property type="project" value="UniProtKB-EC"/>
</dbReference>
<dbReference type="FunFam" id="1.20.58.1610:FF:000004">
    <property type="entry name" value="NADH-quinone oxidoreductase subunit A"/>
    <property type="match status" value="1"/>
</dbReference>
<dbReference type="Gene3D" id="1.20.58.1610">
    <property type="entry name" value="NADH:ubiquinone/plastoquinone oxidoreductase, chain 3"/>
    <property type="match status" value="1"/>
</dbReference>
<dbReference type="InterPro" id="IPR000440">
    <property type="entry name" value="NADH_UbQ/plastoQ_OxRdtase_su3"/>
</dbReference>
<dbReference type="InterPro" id="IPR038430">
    <property type="entry name" value="NDAH_ubi_oxred_su3_sf"/>
</dbReference>
<dbReference type="PANTHER" id="PTHR11058">
    <property type="entry name" value="NADH-UBIQUINONE OXIDOREDUCTASE CHAIN 3"/>
    <property type="match status" value="1"/>
</dbReference>
<dbReference type="PANTHER" id="PTHR11058:SF9">
    <property type="entry name" value="NADH-UBIQUINONE OXIDOREDUCTASE CHAIN 3"/>
    <property type="match status" value="1"/>
</dbReference>
<dbReference type="Pfam" id="PF00507">
    <property type="entry name" value="Oxidored_q4"/>
    <property type="match status" value="1"/>
</dbReference>
<protein>
    <recommendedName>
        <fullName>NADH-ubiquinone oxidoreductase chain 3</fullName>
        <ecNumber>7.1.1.2</ecNumber>
    </recommendedName>
    <alternativeName>
        <fullName>NADH dehydrogenase subunit 3</fullName>
    </alternativeName>
</protein>
<accession>P20688</accession>
<organism>
    <name type="scientific">Oncorhynchus nerka</name>
    <name type="common">Sockeye salmon</name>
    <name type="synonym">Salmo nerka</name>
    <dbReference type="NCBI Taxonomy" id="8023"/>
    <lineage>
        <taxon>Eukaryota</taxon>
        <taxon>Metazoa</taxon>
        <taxon>Chordata</taxon>
        <taxon>Craniata</taxon>
        <taxon>Vertebrata</taxon>
        <taxon>Euteleostomi</taxon>
        <taxon>Actinopterygii</taxon>
        <taxon>Neopterygii</taxon>
        <taxon>Teleostei</taxon>
        <taxon>Protacanthopterygii</taxon>
        <taxon>Salmoniformes</taxon>
        <taxon>Salmonidae</taxon>
        <taxon>Salmoninae</taxon>
        <taxon>Oncorhynchus</taxon>
    </lineage>
</organism>
<comment type="function">
    <text evidence="1">Core subunit of the mitochondrial membrane respiratory chain NADH dehydrogenase (Complex I) that is believed to belong to the minimal assembly required for catalysis. Complex I functions in the transfer of electrons from NADH to the respiratory chain. The immediate electron acceptor for the enzyme is believed to be ubiquinone (By similarity).</text>
</comment>
<comment type="catalytic activity">
    <reaction>
        <text>a ubiquinone + NADH + 5 H(+)(in) = a ubiquinol + NAD(+) + 4 H(+)(out)</text>
        <dbReference type="Rhea" id="RHEA:29091"/>
        <dbReference type="Rhea" id="RHEA-COMP:9565"/>
        <dbReference type="Rhea" id="RHEA-COMP:9566"/>
        <dbReference type="ChEBI" id="CHEBI:15378"/>
        <dbReference type="ChEBI" id="CHEBI:16389"/>
        <dbReference type="ChEBI" id="CHEBI:17976"/>
        <dbReference type="ChEBI" id="CHEBI:57540"/>
        <dbReference type="ChEBI" id="CHEBI:57945"/>
        <dbReference type="EC" id="7.1.1.2"/>
    </reaction>
</comment>
<comment type="subcellular location">
    <subcellularLocation>
        <location evidence="1">Mitochondrion membrane</location>
        <topology evidence="1">Multi-pass membrane protein</topology>
    </subcellularLocation>
</comment>
<comment type="similarity">
    <text evidence="3">Belongs to the complex I subunit 3 family.</text>
</comment>